<organism>
    <name type="scientific">Mus musculus</name>
    <name type="common">Mouse</name>
    <dbReference type="NCBI Taxonomy" id="10090"/>
    <lineage>
        <taxon>Eukaryota</taxon>
        <taxon>Metazoa</taxon>
        <taxon>Chordata</taxon>
        <taxon>Craniata</taxon>
        <taxon>Vertebrata</taxon>
        <taxon>Euteleostomi</taxon>
        <taxon>Mammalia</taxon>
        <taxon>Eutheria</taxon>
        <taxon>Euarchontoglires</taxon>
        <taxon>Glires</taxon>
        <taxon>Rodentia</taxon>
        <taxon>Myomorpha</taxon>
        <taxon>Muroidea</taxon>
        <taxon>Muridae</taxon>
        <taxon>Murinae</taxon>
        <taxon>Mus</taxon>
        <taxon>Mus</taxon>
    </lineage>
</organism>
<name>NUBP1_MOUSE</name>
<dbReference type="EMBL" id="AF114170">
    <property type="protein sequence ID" value="AAF01786.1"/>
    <property type="molecule type" value="mRNA"/>
</dbReference>
<dbReference type="EMBL" id="AK020141">
    <property type="protein sequence ID" value="BAB32007.1"/>
    <property type="molecule type" value="mRNA"/>
</dbReference>
<dbReference type="EMBL" id="AK157212">
    <property type="protein sequence ID" value="BAE34002.1"/>
    <property type="molecule type" value="mRNA"/>
</dbReference>
<dbReference type="EMBL" id="BC055436">
    <property type="protein sequence ID" value="AAH55436.1"/>
    <property type="molecule type" value="mRNA"/>
</dbReference>
<dbReference type="CCDS" id="CCDS27948.1"/>
<dbReference type="RefSeq" id="NP_036085.1">
    <property type="nucleotide sequence ID" value="NM_011955.2"/>
</dbReference>
<dbReference type="SMR" id="Q9R060"/>
<dbReference type="BioGRID" id="204977">
    <property type="interactions" value="6"/>
</dbReference>
<dbReference type="FunCoup" id="Q9R060">
    <property type="interactions" value="1161"/>
</dbReference>
<dbReference type="STRING" id="10090.ENSMUSP00000023146"/>
<dbReference type="GlyGen" id="Q9R060">
    <property type="glycosylation" value="1 site, 1 O-linked glycan (1 site)"/>
</dbReference>
<dbReference type="PhosphoSitePlus" id="Q9R060"/>
<dbReference type="SwissPalm" id="Q9R060"/>
<dbReference type="PaxDb" id="10090-ENSMUSP00000023146"/>
<dbReference type="PeptideAtlas" id="Q9R060"/>
<dbReference type="ProteomicsDB" id="289948"/>
<dbReference type="Pumba" id="Q9R060"/>
<dbReference type="Antibodypedia" id="24622">
    <property type="antibodies" value="148 antibodies from 22 providers"/>
</dbReference>
<dbReference type="DNASU" id="26425"/>
<dbReference type="Ensembl" id="ENSMUST00000023146.5">
    <property type="protein sequence ID" value="ENSMUSP00000023146.5"/>
    <property type="gene ID" value="ENSMUSG00000022503.11"/>
</dbReference>
<dbReference type="GeneID" id="26425"/>
<dbReference type="KEGG" id="mmu:26425"/>
<dbReference type="UCSC" id="uc007ydo.2">
    <property type="organism name" value="mouse"/>
</dbReference>
<dbReference type="AGR" id="MGI:1347073"/>
<dbReference type="CTD" id="4682"/>
<dbReference type="MGI" id="MGI:1347073">
    <property type="gene designation" value="Nubp1"/>
</dbReference>
<dbReference type="VEuPathDB" id="HostDB:ENSMUSG00000022503"/>
<dbReference type="eggNOG" id="KOG3022">
    <property type="taxonomic scope" value="Eukaryota"/>
</dbReference>
<dbReference type="GeneTree" id="ENSGT00950000183193"/>
<dbReference type="HOGENOM" id="CLU_024839_0_1_1"/>
<dbReference type="InParanoid" id="Q9R060"/>
<dbReference type="OMA" id="VSGCPMR"/>
<dbReference type="OrthoDB" id="1741334at2759"/>
<dbReference type="PhylomeDB" id="Q9R060"/>
<dbReference type="TreeFam" id="TF300755"/>
<dbReference type="BioGRID-ORCS" id="26425">
    <property type="hits" value="26 hits in 74 CRISPR screens"/>
</dbReference>
<dbReference type="ChiTaRS" id="Nubp1">
    <property type="organism name" value="mouse"/>
</dbReference>
<dbReference type="PRO" id="PR:Q9R060"/>
<dbReference type="Proteomes" id="UP000000589">
    <property type="component" value="Chromosome 16"/>
</dbReference>
<dbReference type="RNAct" id="Q9R060">
    <property type="molecule type" value="protein"/>
</dbReference>
<dbReference type="Bgee" id="ENSMUSG00000022503">
    <property type="expression patterns" value="Expressed in ear vesicle and 260 other cell types or tissues"/>
</dbReference>
<dbReference type="ExpressionAtlas" id="Q9R060">
    <property type="expression patterns" value="baseline and differential"/>
</dbReference>
<dbReference type="GO" id="GO:0005814">
    <property type="term" value="C:centriole"/>
    <property type="evidence" value="ECO:0007669"/>
    <property type="project" value="UniProtKB-SubCell"/>
</dbReference>
<dbReference type="GO" id="GO:0005813">
    <property type="term" value="C:centrosome"/>
    <property type="evidence" value="ECO:0007669"/>
    <property type="project" value="Ensembl"/>
</dbReference>
<dbReference type="GO" id="GO:0005929">
    <property type="term" value="C:cilium"/>
    <property type="evidence" value="ECO:0007669"/>
    <property type="project" value="UniProtKB-KW"/>
</dbReference>
<dbReference type="GO" id="GO:0005829">
    <property type="term" value="C:cytosol"/>
    <property type="evidence" value="ECO:0000250"/>
    <property type="project" value="UniProtKB"/>
</dbReference>
<dbReference type="GO" id="GO:0005794">
    <property type="term" value="C:Golgi apparatus"/>
    <property type="evidence" value="ECO:0007669"/>
    <property type="project" value="Ensembl"/>
</dbReference>
<dbReference type="GO" id="GO:0005634">
    <property type="term" value="C:nucleus"/>
    <property type="evidence" value="ECO:0007669"/>
    <property type="project" value="UniProtKB-SubCell"/>
</dbReference>
<dbReference type="GO" id="GO:0051539">
    <property type="term" value="F:4 iron, 4 sulfur cluster binding"/>
    <property type="evidence" value="ECO:0007669"/>
    <property type="project" value="UniProtKB-UniRule"/>
</dbReference>
<dbReference type="GO" id="GO:0005524">
    <property type="term" value="F:ATP binding"/>
    <property type="evidence" value="ECO:0007669"/>
    <property type="project" value="UniProtKB-KW"/>
</dbReference>
<dbReference type="GO" id="GO:0016887">
    <property type="term" value="F:ATP hydrolysis activity"/>
    <property type="evidence" value="ECO:0007669"/>
    <property type="project" value="InterPro"/>
</dbReference>
<dbReference type="GO" id="GO:0140663">
    <property type="term" value="F:ATP-dependent FeS chaperone activity"/>
    <property type="evidence" value="ECO:0007669"/>
    <property type="project" value="InterPro"/>
</dbReference>
<dbReference type="GO" id="GO:0051536">
    <property type="term" value="F:iron-sulfur cluster binding"/>
    <property type="evidence" value="ECO:0000250"/>
    <property type="project" value="UniProtKB"/>
</dbReference>
<dbReference type="GO" id="GO:0046872">
    <property type="term" value="F:metal ion binding"/>
    <property type="evidence" value="ECO:0007669"/>
    <property type="project" value="UniProtKB-KW"/>
</dbReference>
<dbReference type="GO" id="GO:0030030">
    <property type="term" value="P:cell projection organization"/>
    <property type="evidence" value="ECO:0007669"/>
    <property type="project" value="UniProtKB-KW"/>
</dbReference>
<dbReference type="GO" id="GO:0051642">
    <property type="term" value="P:centrosome localization"/>
    <property type="evidence" value="ECO:0000315"/>
    <property type="project" value="MGI"/>
</dbReference>
<dbReference type="GO" id="GO:0006879">
    <property type="term" value="P:intracellular iron ion homeostasis"/>
    <property type="evidence" value="ECO:0007669"/>
    <property type="project" value="Ensembl"/>
</dbReference>
<dbReference type="GO" id="GO:0016226">
    <property type="term" value="P:iron-sulfur cluster assembly"/>
    <property type="evidence" value="ECO:0000250"/>
    <property type="project" value="UniProtKB"/>
</dbReference>
<dbReference type="GO" id="GO:0010826">
    <property type="term" value="P:negative regulation of centrosome duplication"/>
    <property type="evidence" value="ECO:0000315"/>
    <property type="project" value="MGI"/>
</dbReference>
<dbReference type="GO" id="GO:0072697">
    <property type="term" value="P:protein localization to cell cortex"/>
    <property type="evidence" value="ECO:0000315"/>
    <property type="project" value="MGI"/>
</dbReference>
<dbReference type="GO" id="GO:0001558">
    <property type="term" value="P:regulation of cell growth"/>
    <property type="evidence" value="ECO:0007669"/>
    <property type="project" value="Ensembl"/>
</dbReference>
<dbReference type="CDD" id="cd02037">
    <property type="entry name" value="Mrp_NBP35"/>
    <property type="match status" value="1"/>
</dbReference>
<dbReference type="FunFam" id="3.40.50.300:FF:000427">
    <property type="entry name" value="Cytosolic Fe-S cluster assembly factor NUBP1"/>
    <property type="match status" value="1"/>
</dbReference>
<dbReference type="Gene3D" id="3.40.50.300">
    <property type="entry name" value="P-loop containing nucleotide triphosphate hydrolases"/>
    <property type="match status" value="1"/>
</dbReference>
<dbReference type="HAMAP" id="MF_02040">
    <property type="entry name" value="Mrp_NBP35"/>
    <property type="match status" value="1"/>
</dbReference>
<dbReference type="HAMAP" id="MF_03038">
    <property type="entry name" value="NUBP1"/>
    <property type="match status" value="1"/>
</dbReference>
<dbReference type="InterPro" id="IPR003593">
    <property type="entry name" value="AAA+_ATPase"/>
</dbReference>
<dbReference type="InterPro" id="IPR000808">
    <property type="entry name" value="Mrp-like_CS"/>
</dbReference>
<dbReference type="InterPro" id="IPR019591">
    <property type="entry name" value="Mrp/NBP35_ATP-bd"/>
</dbReference>
<dbReference type="InterPro" id="IPR028601">
    <property type="entry name" value="NUBP1/Nbp35"/>
</dbReference>
<dbReference type="InterPro" id="IPR027417">
    <property type="entry name" value="P-loop_NTPase"/>
</dbReference>
<dbReference type="InterPro" id="IPR033756">
    <property type="entry name" value="YlxH/NBP35"/>
</dbReference>
<dbReference type="PANTHER" id="PTHR23264:SF35">
    <property type="entry name" value="CYTOSOLIC FE-S CLUSTER ASSEMBLY FACTOR NUBP1"/>
    <property type="match status" value="1"/>
</dbReference>
<dbReference type="PANTHER" id="PTHR23264">
    <property type="entry name" value="NUCLEOTIDE-BINDING PROTEIN NBP35 YEAST -RELATED"/>
    <property type="match status" value="1"/>
</dbReference>
<dbReference type="Pfam" id="PF10609">
    <property type="entry name" value="ParA"/>
    <property type="match status" value="1"/>
</dbReference>
<dbReference type="SMART" id="SM00382">
    <property type="entry name" value="AAA"/>
    <property type="match status" value="1"/>
</dbReference>
<dbReference type="SUPFAM" id="SSF52540">
    <property type="entry name" value="P-loop containing nucleoside triphosphate hydrolases"/>
    <property type="match status" value="1"/>
</dbReference>
<dbReference type="PROSITE" id="PS01215">
    <property type="entry name" value="MRP"/>
    <property type="match status" value="1"/>
</dbReference>
<accession>Q9R060</accession>
<accession>Q3U053</accession>
<accession>Q7TMI1</accession>
<accession>Q9CRM5</accession>
<comment type="function">
    <text evidence="3 4 5">Component of the cytosolic iron-sulfur (Fe/S) protein assembly (CIA) machinery. Required for maturation of extramitochondrial Fe-S proteins. The NUBP1-NUBP2 heterotetramer forms a Fe-S scaffold complex, mediating the de novo assembly of an Fe-S cluster and its transfer to target apoproteins (By similarity). Implicated in the regulation of centrosome duplication (PubMed:16638812, PubMed:23807208). Negatively regulates cilium formation and structure (PubMed:23807208).</text>
</comment>
<comment type="cofactor">
    <cofactor evidence="3">
        <name>[4Fe-4S] cluster</name>
        <dbReference type="ChEBI" id="CHEBI:49883"/>
    </cofactor>
    <text evidence="3">Binds 4 [4Fe-4S] clusters per heterotetramer. Contains two stable clusters in the N-termini of NUBP1 and two labile, bridging clusters between subunits of the NUBP1-NUBP2 heterotetramer.</text>
</comment>
<comment type="subunit">
    <text evidence="3 4 5">Heterotetramer of 2 NUBP1 and 2 NUBP2 chains (PubMed:16638812). Interacts with KIFC1 (PubMed:16638812). Interacts with NUBP2 (PubMed:16638812). Interacts with the BBS/CCT complex subunit CCT1 (PubMed:23807208).</text>
</comment>
<comment type="subcellular location">
    <subcellularLocation>
        <location evidence="3 5">Cytoplasm</location>
    </subcellularLocation>
    <subcellularLocation>
        <location evidence="5">Nucleus</location>
    </subcellularLocation>
    <subcellularLocation>
        <location evidence="5">Cell projection</location>
    </subcellularLocation>
    <subcellularLocation>
        <location evidence="5">Cytoplasm</location>
        <location evidence="5">Cytoskeleton</location>
        <location evidence="5">Cilium axoneme</location>
    </subcellularLocation>
    <subcellularLocation>
        <location evidence="5">Cytoplasm</location>
        <location evidence="5">Cytoskeleton</location>
        <location evidence="5">Cilium basal body</location>
    </subcellularLocation>
    <subcellularLocation>
        <location evidence="5">Cytoplasm</location>
        <location evidence="5">Cytoskeleton</location>
        <location evidence="5">Microtubule organizing center</location>
    </subcellularLocation>
    <subcellularLocation>
        <location evidence="5">Cytoplasm</location>
        <location evidence="5">Cytoskeleton</location>
        <location evidence="5">Microtubule organizing center</location>
        <location evidence="5">Centrosome</location>
        <location evidence="5">Centriole</location>
    </subcellularLocation>
    <text evidence="5">Enriched in centrioles of microtubule asters during prophase, prometaphase and telophase stages of mitosis. Localized at centrioles and in the nucleus at interphase. Colocalizes with NUBP2 at prometaphase. Specifically localizes to the axenome of motile cilia as opposed to primary non-motile cilia. Localization is independent of NUBP2 and KIFC1.</text>
</comment>
<comment type="tissue specificity">
    <text evidence="5">Expressed in trachea epithelial cells, and kidney inner medullary collecting duct cells.</text>
</comment>
<comment type="induction">
    <text evidence="5">High and constant expression in cycling cells. Down-regulated upon cell cycle exit and quiescence.</text>
</comment>
<comment type="miscellaneous">
    <text>NIH3T3 cells expressing reduced levels of Nubp1 show an increase in number of centrosomes per cell and an increase in the fraction of multinucleated cells.</text>
</comment>
<comment type="similarity">
    <text evidence="3">Belongs to the Mrp/NBP35 ATP-binding proteins family. NUBP1/NBP35 subfamily.</text>
</comment>
<protein>
    <recommendedName>
        <fullName evidence="3">Cytosolic Fe-S cluster assembly factor NUBP1</fullName>
    </recommendedName>
    <alternativeName>
        <fullName evidence="3">Nucleotide-binding protein 1</fullName>
        <shortName evidence="3">NBP 1</shortName>
    </alternativeName>
</protein>
<sequence length="320" mass="34085">MEEAPHGCPGADSAQAGRGASCQGCPNQRLCASGAGAAPDPAVEEIREKMKTVRHKLLVLSGKGGVGKSTFSAHLAHGLAEDGDTQVALLDIDICGPSIPKIMGLEGEQVHQSGSGWSPVYVDDNLGVMSVGFLLSSPDDAVIWRGPKKNGMIKQFLRDVDWGDVDYLIVDTPPGTSDEHLSVVQYLAAAHIDGAVILTTPQEVALQDVRKEISFCHKVKLPIIGVVENMSGFICPKCKKESQIFPPTTGGAEAMCQDLRIPLLGKVPLDPHIGKSCDKGQSFFVEAPDSPATAAYRSIIQRIRDFCNSHQSHAETLISP</sequence>
<gene>
    <name type="primary">Nubp1</name>
</gene>
<keyword id="KW-0004">4Fe-4S</keyword>
<keyword id="KW-0007">Acetylation</keyword>
<keyword id="KW-0067">ATP-binding</keyword>
<keyword id="KW-0966">Cell projection</keyword>
<keyword id="KW-0969">Cilium</keyword>
<keyword id="KW-0970">Cilium biogenesis/degradation</keyword>
<keyword id="KW-0963">Cytoplasm</keyword>
<keyword id="KW-0206">Cytoskeleton</keyword>
<keyword id="KW-0408">Iron</keyword>
<keyword id="KW-0411">Iron-sulfur</keyword>
<keyword id="KW-0479">Metal-binding</keyword>
<keyword id="KW-0547">Nucleotide-binding</keyword>
<keyword id="KW-0539">Nucleus</keyword>
<keyword id="KW-0597">Phosphoprotein</keyword>
<keyword id="KW-1185">Reference proteome</keyword>
<evidence type="ECO:0000250" key="1">
    <source>
        <dbReference type="UniProtKB" id="P53384"/>
    </source>
</evidence>
<evidence type="ECO:0000250" key="2">
    <source>
        <dbReference type="UniProtKB" id="Q5I0L4"/>
    </source>
</evidence>
<evidence type="ECO:0000255" key="3">
    <source>
        <dbReference type="HAMAP-Rule" id="MF_03038"/>
    </source>
</evidence>
<evidence type="ECO:0000269" key="4">
    <source>
    </source>
</evidence>
<evidence type="ECO:0000269" key="5">
    <source>
    </source>
</evidence>
<evidence type="ECO:0000305" key="6"/>
<feature type="chain" id="PRO_0000184944" description="Cytosolic Fe-S cluster assembly factor NUBP1">
    <location>
        <begin position="1"/>
        <end position="320"/>
    </location>
</feature>
<feature type="binding site" evidence="3">
    <location>
        <position position="8"/>
    </location>
    <ligand>
        <name>[4Fe-4S] cluster</name>
        <dbReference type="ChEBI" id="CHEBI:49883"/>
        <label>1</label>
    </ligand>
</feature>
<feature type="binding site" evidence="3">
    <location>
        <position position="22"/>
    </location>
    <ligand>
        <name>[4Fe-4S] cluster</name>
        <dbReference type="ChEBI" id="CHEBI:49883"/>
        <label>1</label>
    </ligand>
</feature>
<feature type="binding site" evidence="3">
    <location>
        <position position="25"/>
    </location>
    <ligand>
        <name>[4Fe-4S] cluster</name>
        <dbReference type="ChEBI" id="CHEBI:49883"/>
        <label>1</label>
    </ligand>
</feature>
<feature type="binding site" evidence="3">
    <location>
        <position position="31"/>
    </location>
    <ligand>
        <name>[4Fe-4S] cluster</name>
        <dbReference type="ChEBI" id="CHEBI:49883"/>
        <label>1</label>
    </ligand>
</feature>
<feature type="binding site" evidence="3">
    <location>
        <begin position="62"/>
        <end position="69"/>
    </location>
    <ligand>
        <name>ATP</name>
        <dbReference type="ChEBI" id="CHEBI:30616"/>
    </ligand>
</feature>
<feature type="binding site" evidence="3">
    <location>
        <position position="235"/>
    </location>
    <ligand>
        <name>[4Fe-4S] cluster</name>
        <dbReference type="ChEBI" id="CHEBI:49883"/>
        <label>2</label>
        <note>ligand shared with heterodimeric partner</note>
    </ligand>
</feature>
<feature type="binding site" evidence="3">
    <location>
        <position position="238"/>
    </location>
    <ligand>
        <name>[4Fe-4S] cluster</name>
        <dbReference type="ChEBI" id="CHEBI:49883"/>
        <label>2</label>
        <note>ligand shared with heterodimeric partner</note>
    </ligand>
</feature>
<feature type="modified residue" description="N-acetylmethionine" evidence="1">
    <location>
        <position position="1"/>
    </location>
</feature>
<feature type="modified residue" description="Phosphoserine" evidence="2">
    <location>
        <position position="319"/>
    </location>
</feature>
<feature type="sequence conflict" description="In Ref. 3; AAH55436." evidence="6" ref="3">
    <original>V</original>
    <variation>I</variation>
    <location>
        <position position="170"/>
    </location>
</feature>
<feature type="sequence conflict" description="In Ref. 2; BAB32007." evidence="6" ref="2">
    <original>C</original>
    <variation>S</variation>
    <location>
        <position position="235"/>
    </location>
</feature>
<feature type="sequence conflict" description="In Ref. 3; AAH55436." evidence="6" ref="3">
    <original>R</original>
    <variation>K</variation>
    <location>
        <position position="260"/>
    </location>
</feature>
<feature type="sequence conflict" description="In Ref. 3; AAH55436." evidence="6" ref="3">
    <original>H</original>
    <variation>R</variation>
    <location>
        <position position="310"/>
    </location>
</feature>
<proteinExistence type="evidence at protein level"/>
<reference key="1">
    <citation type="journal article" date="1999" name="Genomics">
        <title>Two novel mouse genes -- Nubp2, mapped to the T-complex on chromosome 17, and Nubp1, mapped to chromosome 16 -- establish a new gene family of nucleotide-binding proteins in eukaryotes.</title>
        <authorList>
            <person name="Nakashima H."/>
            <person name="Grahovac M.J."/>
            <person name="Mazzarella R."/>
            <person name="Fujiwara H."/>
            <person name="Kitchen J.R."/>
            <person name="Threat T.A."/>
            <person name="Ko M.S.H."/>
        </authorList>
    </citation>
    <scope>NUCLEOTIDE SEQUENCE [MRNA]</scope>
    <source>
        <strain>BALB/cJ</strain>
    </source>
</reference>
<reference key="2">
    <citation type="journal article" date="2005" name="Science">
        <title>The transcriptional landscape of the mammalian genome.</title>
        <authorList>
            <person name="Carninci P."/>
            <person name="Kasukawa T."/>
            <person name="Katayama S."/>
            <person name="Gough J."/>
            <person name="Frith M.C."/>
            <person name="Maeda N."/>
            <person name="Oyama R."/>
            <person name="Ravasi T."/>
            <person name="Lenhard B."/>
            <person name="Wells C."/>
            <person name="Kodzius R."/>
            <person name="Shimokawa K."/>
            <person name="Bajic V.B."/>
            <person name="Brenner S.E."/>
            <person name="Batalov S."/>
            <person name="Forrest A.R."/>
            <person name="Zavolan M."/>
            <person name="Davis M.J."/>
            <person name="Wilming L.G."/>
            <person name="Aidinis V."/>
            <person name="Allen J.E."/>
            <person name="Ambesi-Impiombato A."/>
            <person name="Apweiler R."/>
            <person name="Aturaliya R.N."/>
            <person name="Bailey T.L."/>
            <person name="Bansal M."/>
            <person name="Baxter L."/>
            <person name="Beisel K.W."/>
            <person name="Bersano T."/>
            <person name="Bono H."/>
            <person name="Chalk A.M."/>
            <person name="Chiu K.P."/>
            <person name="Choudhary V."/>
            <person name="Christoffels A."/>
            <person name="Clutterbuck D.R."/>
            <person name="Crowe M.L."/>
            <person name="Dalla E."/>
            <person name="Dalrymple B.P."/>
            <person name="de Bono B."/>
            <person name="Della Gatta G."/>
            <person name="di Bernardo D."/>
            <person name="Down T."/>
            <person name="Engstrom P."/>
            <person name="Fagiolini M."/>
            <person name="Faulkner G."/>
            <person name="Fletcher C.F."/>
            <person name="Fukushima T."/>
            <person name="Furuno M."/>
            <person name="Futaki S."/>
            <person name="Gariboldi M."/>
            <person name="Georgii-Hemming P."/>
            <person name="Gingeras T.R."/>
            <person name="Gojobori T."/>
            <person name="Green R.E."/>
            <person name="Gustincich S."/>
            <person name="Harbers M."/>
            <person name="Hayashi Y."/>
            <person name="Hensch T.K."/>
            <person name="Hirokawa N."/>
            <person name="Hill D."/>
            <person name="Huminiecki L."/>
            <person name="Iacono M."/>
            <person name="Ikeo K."/>
            <person name="Iwama A."/>
            <person name="Ishikawa T."/>
            <person name="Jakt M."/>
            <person name="Kanapin A."/>
            <person name="Katoh M."/>
            <person name="Kawasawa Y."/>
            <person name="Kelso J."/>
            <person name="Kitamura H."/>
            <person name="Kitano H."/>
            <person name="Kollias G."/>
            <person name="Krishnan S.P."/>
            <person name="Kruger A."/>
            <person name="Kummerfeld S.K."/>
            <person name="Kurochkin I.V."/>
            <person name="Lareau L.F."/>
            <person name="Lazarevic D."/>
            <person name="Lipovich L."/>
            <person name="Liu J."/>
            <person name="Liuni S."/>
            <person name="McWilliam S."/>
            <person name="Madan Babu M."/>
            <person name="Madera M."/>
            <person name="Marchionni L."/>
            <person name="Matsuda H."/>
            <person name="Matsuzawa S."/>
            <person name="Miki H."/>
            <person name="Mignone F."/>
            <person name="Miyake S."/>
            <person name="Morris K."/>
            <person name="Mottagui-Tabar S."/>
            <person name="Mulder N."/>
            <person name="Nakano N."/>
            <person name="Nakauchi H."/>
            <person name="Ng P."/>
            <person name="Nilsson R."/>
            <person name="Nishiguchi S."/>
            <person name="Nishikawa S."/>
            <person name="Nori F."/>
            <person name="Ohara O."/>
            <person name="Okazaki Y."/>
            <person name="Orlando V."/>
            <person name="Pang K.C."/>
            <person name="Pavan W.J."/>
            <person name="Pavesi G."/>
            <person name="Pesole G."/>
            <person name="Petrovsky N."/>
            <person name="Piazza S."/>
            <person name="Reed J."/>
            <person name="Reid J.F."/>
            <person name="Ring B.Z."/>
            <person name="Ringwald M."/>
            <person name="Rost B."/>
            <person name="Ruan Y."/>
            <person name="Salzberg S.L."/>
            <person name="Sandelin A."/>
            <person name="Schneider C."/>
            <person name="Schoenbach C."/>
            <person name="Sekiguchi K."/>
            <person name="Semple C.A."/>
            <person name="Seno S."/>
            <person name="Sessa L."/>
            <person name="Sheng Y."/>
            <person name="Shibata Y."/>
            <person name="Shimada H."/>
            <person name="Shimada K."/>
            <person name="Silva D."/>
            <person name="Sinclair B."/>
            <person name="Sperling S."/>
            <person name="Stupka E."/>
            <person name="Sugiura K."/>
            <person name="Sultana R."/>
            <person name="Takenaka Y."/>
            <person name="Taki K."/>
            <person name="Tammoja K."/>
            <person name="Tan S.L."/>
            <person name="Tang S."/>
            <person name="Taylor M.S."/>
            <person name="Tegner J."/>
            <person name="Teichmann S.A."/>
            <person name="Ueda H.R."/>
            <person name="van Nimwegen E."/>
            <person name="Verardo R."/>
            <person name="Wei C.L."/>
            <person name="Yagi K."/>
            <person name="Yamanishi H."/>
            <person name="Zabarovsky E."/>
            <person name="Zhu S."/>
            <person name="Zimmer A."/>
            <person name="Hide W."/>
            <person name="Bult C."/>
            <person name="Grimmond S.M."/>
            <person name="Teasdale R.D."/>
            <person name="Liu E.T."/>
            <person name="Brusic V."/>
            <person name="Quackenbush J."/>
            <person name="Wahlestedt C."/>
            <person name="Mattick J.S."/>
            <person name="Hume D.A."/>
            <person name="Kai C."/>
            <person name="Sasaki D."/>
            <person name="Tomaru Y."/>
            <person name="Fukuda S."/>
            <person name="Kanamori-Katayama M."/>
            <person name="Suzuki M."/>
            <person name="Aoki J."/>
            <person name="Arakawa T."/>
            <person name="Iida J."/>
            <person name="Imamura K."/>
            <person name="Itoh M."/>
            <person name="Kato T."/>
            <person name="Kawaji H."/>
            <person name="Kawagashira N."/>
            <person name="Kawashima T."/>
            <person name="Kojima M."/>
            <person name="Kondo S."/>
            <person name="Konno H."/>
            <person name="Nakano K."/>
            <person name="Ninomiya N."/>
            <person name="Nishio T."/>
            <person name="Okada M."/>
            <person name="Plessy C."/>
            <person name="Shibata K."/>
            <person name="Shiraki T."/>
            <person name="Suzuki S."/>
            <person name="Tagami M."/>
            <person name="Waki K."/>
            <person name="Watahiki A."/>
            <person name="Okamura-Oho Y."/>
            <person name="Suzuki H."/>
            <person name="Kawai J."/>
            <person name="Hayashizaki Y."/>
        </authorList>
    </citation>
    <scope>NUCLEOTIDE SEQUENCE [LARGE SCALE MRNA]</scope>
    <source>
        <strain>C57BL/6J</strain>
        <strain>NOD</strain>
        <tissue>Retina</tissue>
        <tissue>Spleen</tissue>
        <tissue>Wolffian duct</tissue>
    </source>
</reference>
<reference key="3">
    <citation type="journal article" date="2004" name="Genome Res.">
        <title>The status, quality, and expansion of the NIH full-length cDNA project: the Mammalian Gene Collection (MGC).</title>
        <authorList>
            <consortium name="The MGC Project Team"/>
        </authorList>
    </citation>
    <scope>NUCLEOTIDE SEQUENCE [LARGE SCALE MRNA]</scope>
    <source>
        <strain>Czech II</strain>
        <tissue>Mammary gland</tissue>
    </source>
</reference>
<reference key="4">
    <citation type="journal article" date="2006" name="J. Cell Sci.">
        <title>Motor protein KIFC5A interacts with Nubp1 and Nubp2, and is implicated in the regulation of centrosome duplication.</title>
        <authorList>
            <person name="Christodoulou A."/>
            <person name="Lederer C.W."/>
            <person name="Surrey T."/>
            <person name="Vernos I."/>
            <person name="Santama N."/>
        </authorList>
    </citation>
    <scope>FUNCTION</scope>
    <scope>INTERACTION WITH KIFC1 AND NUBP2</scope>
</reference>
<reference key="5">
    <citation type="journal article" date="2010" name="Cell">
        <title>A tissue-specific atlas of mouse protein phosphorylation and expression.</title>
        <authorList>
            <person name="Huttlin E.L."/>
            <person name="Jedrychowski M.P."/>
            <person name="Elias J.E."/>
            <person name="Goswami T."/>
            <person name="Rad R."/>
            <person name="Beausoleil S.A."/>
            <person name="Villen J."/>
            <person name="Haas W."/>
            <person name="Sowa M.E."/>
            <person name="Gygi S.P."/>
        </authorList>
    </citation>
    <scope>IDENTIFICATION BY MASS SPECTROMETRY [LARGE SCALE ANALYSIS]</scope>
    <source>
        <tissue>Heart</tissue>
        <tissue>Kidney</tissue>
        <tissue>Liver</tissue>
        <tissue>Lung</tissue>
        <tissue>Pancreas</tissue>
        <tissue>Spleen</tissue>
        <tissue>Testis</tissue>
    </source>
</reference>
<reference key="6">
    <citation type="journal article" date="2014" name="Cell. Mol. Life Sci.">
        <title>The nucleotide-binding proteins Nubp1 and Nubp2 are negative regulators of ciliogenesis.</title>
        <authorList>
            <person name="Kypri E."/>
            <person name="Christodoulou A."/>
            <person name="Maimaris G."/>
            <person name="Lethan M."/>
            <person name="Markaki M."/>
            <person name="Lysandrou C."/>
            <person name="Lederer C.W."/>
            <person name="Tavernarakis N."/>
            <person name="Geimer S."/>
            <person name="Pedersen L.B."/>
            <person name="Santama N."/>
        </authorList>
    </citation>
    <scope>FUNCTION</scope>
    <scope>INTERACTION WITH CCT1</scope>
    <scope>SUBCELLULAR LOCATION</scope>
    <scope>TISSUE SPECIFICITY</scope>
</reference>